<dbReference type="EMBL" id="CP000036">
    <property type="protein sequence ID" value="ABB65286.1"/>
    <property type="molecule type" value="Genomic_DNA"/>
</dbReference>
<dbReference type="RefSeq" id="WP_011379123.1">
    <property type="nucleotide sequence ID" value="NC_007613.1"/>
</dbReference>
<dbReference type="SMR" id="Q324H2"/>
<dbReference type="KEGG" id="sbo:SBO_0599"/>
<dbReference type="HOGENOM" id="CLU_047123_0_0_6"/>
<dbReference type="Proteomes" id="UP000007067">
    <property type="component" value="Chromosome"/>
</dbReference>
<dbReference type="GO" id="GO:0042597">
    <property type="term" value="C:periplasmic space"/>
    <property type="evidence" value="ECO:0007669"/>
    <property type="project" value="UniProtKB-SubCell"/>
</dbReference>
<dbReference type="GO" id="GO:0051301">
    <property type="term" value="P:cell division"/>
    <property type="evidence" value="ECO:0007669"/>
    <property type="project" value="UniProtKB-UniRule"/>
</dbReference>
<dbReference type="GO" id="GO:0017038">
    <property type="term" value="P:protein import"/>
    <property type="evidence" value="ECO:0007669"/>
    <property type="project" value="InterPro"/>
</dbReference>
<dbReference type="FunFam" id="2.120.10.30:FF:000022">
    <property type="entry name" value="Tol-Pal system protein TolB"/>
    <property type="match status" value="1"/>
</dbReference>
<dbReference type="FunFam" id="3.40.50.10070:FF:000001">
    <property type="entry name" value="Tol-Pal system protein TolB"/>
    <property type="match status" value="1"/>
</dbReference>
<dbReference type="Gene3D" id="2.120.10.30">
    <property type="entry name" value="TolB, C-terminal domain"/>
    <property type="match status" value="1"/>
</dbReference>
<dbReference type="Gene3D" id="3.40.50.10070">
    <property type="entry name" value="TolB, N-terminal domain"/>
    <property type="match status" value="1"/>
</dbReference>
<dbReference type="HAMAP" id="MF_00671">
    <property type="entry name" value="TolB"/>
    <property type="match status" value="1"/>
</dbReference>
<dbReference type="InterPro" id="IPR011042">
    <property type="entry name" value="6-blade_b-propeller_TolB-like"/>
</dbReference>
<dbReference type="InterPro" id="IPR011659">
    <property type="entry name" value="PD40"/>
</dbReference>
<dbReference type="InterPro" id="IPR014167">
    <property type="entry name" value="Tol-Pal_TolB"/>
</dbReference>
<dbReference type="InterPro" id="IPR007195">
    <property type="entry name" value="TolB_N"/>
</dbReference>
<dbReference type="NCBIfam" id="TIGR02800">
    <property type="entry name" value="propeller_TolB"/>
    <property type="match status" value="1"/>
</dbReference>
<dbReference type="PANTHER" id="PTHR36842:SF1">
    <property type="entry name" value="PROTEIN TOLB"/>
    <property type="match status" value="1"/>
</dbReference>
<dbReference type="PANTHER" id="PTHR36842">
    <property type="entry name" value="PROTEIN TOLB HOMOLOG"/>
    <property type="match status" value="1"/>
</dbReference>
<dbReference type="Pfam" id="PF07676">
    <property type="entry name" value="PD40"/>
    <property type="match status" value="4"/>
</dbReference>
<dbReference type="Pfam" id="PF04052">
    <property type="entry name" value="TolB_N"/>
    <property type="match status" value="1"/>
</dbReference>
<dbReference type="SUPFAM" id="SSF52964">
    <property type="entry name" value="TolB, N-terminal domain"/>
    <property type="match status" value="1"/>
</dbReference>
<dbReference type="SUPFAM" id="SSF69304">
    <property type="entry name" value="Tricorn protease N-terminal domain"/>
    <property type="match status" value="1"/>
</dbReference>
<sequence length="430" mass="45966">MKQALRVAFGFLILWASVLHAEVRIVIDSGVDSGRPIGVVPFQWAGPGAAPEDIGGIVAADLRNSGKFNPLDRARLPQQPGSAQEVQPSAWSALGIDAVVVGQVTPNPDGSYNVAYQLVDTGGAPGTVLAQNSYKVNKQWLRYAGHTASDEVFEKLTGIKGAFRTRIAYVVQTNGGQFPYELRVSDYDGYNQFVVHRSPHPLMSPAWSPDGSKLAYVTFESGRSALVIQTLANGAVRQVASFPRHNGAPAFSPDGSKLAFALSKTGSLNLYVMDLASGQIRQVTDGRSNNTEPTWFPDSQNLAFTSDLAGRPQVYKVNINGGAPQRITWEGSQNQDADVSSDGKFMVMVSSNGGQQHIAKQDLATGGVQVLSSTFLDETPSLAPNGTMVIYSSSQGMGSVLNLVSTDGRFKARLPATDGQVKFPAWSPYL</sequence>
<feature type="signal peptide" evidence="1">
    <location>
        <begin position="1"/>
        <end position="21"/>
    </location>
</feature>
<feature type="chain" id="PRO_0000259088" description="Tol-Pal system protein TolB" evidence="1">
    <location>
        <begin position="22"/>
        <end position="430"/>
    </location>
</feature>
<evidence type="ECO:0000255" key="1">
    <source>
        <dbReference type="HAMAP-Rule" id="MF_00671"/>
    </source>
</evidence>
<proteinExistence type="inferred from homology"/>
<accession>Q324H2</accession>
<reference key="1">
    <citation type="journal article" date="2005" name="Nucleic Acids Res.">
        <title>Genome dynamics and diversity of Shigella species, the etiologic agents of bacillary dysentery.</title>
        <authorList>
            <person name="Yang F."/>
            <person name="Yang J."/>
            <person name="Zhang X."/>
            <person name="Chen L."/>
            <person name="Jiang Y."/>
            <person name="Yan Y."/>
            <person name="Tang X."/>
            <person name="Wang J."/>
            <person name="Xiong Z."/>
            <person name="Dong J."/>
            <person name="Xue Y."/>
            <person name="Zhu Y."/>
            <person name="Xu X."/>
            <person name="Sun L."/>
            <person name="Chen S."/>
            <person name="Nie H."/>
            <person name="Peng J."/>
            <person name="Xu J."/>
            <person name="Wang Y."/>
            <person name="Yuan Z."/>
            <person name="Wen Y."/>
            <person name="Yao Z."/>
            <person name="Shen Y."/>
            <person name="Qiang B."/>
            <person name="Hou Y."/>
            <person name="Yu J."/>
            <person name="Jin Q."/>
        </authorList>
    </citation>
    <scope>NUCLEOTIDE SEQUENCE [LARGE SCALE GENOMIC DNA]</scope>
    <source>
        <strain>Sb227</strain>
    </source>
</reference>
<keyword id="KW-0131">Cell cycle</keyword>
<keyword id="KW-0132">Cell division</keyword>
<keyword id="KW-0574">Periplasm</keyword>
<keyword id="KW-0732">Signal</keyword>
<organism>
    <name type="scientific">Shigella boydii serotype 4 (strain Sb227)</name>
    <dbReference type="NCBI Taxonomy" id="300268"/>
    <lineage>
        <taxon>Bacteria</taxon>
        <taxon>Pseudomonadati</taxon>
        <taxon>Pseudomonadota</taxon>
        <taxon>Gammaproteobacteria</taxon>
        <taxon>Enterobacterales</taxon>
        <taxon>Enterobacteriaceae</taxon>
        <taxon>Shigella</taxon>
    </lineage>
</organism>
<comment type="function">
    <text evidence="1">Part of the Tol-Pal system, which plays a role in outer membrane invagination during cell division and is important for maintaining outer membrane integrity. TolB occupies a key intermediary position in the Tol-Pal system because it communicates directly with both membrane-embedded components, Pal in the outer membrane and TolA in the inner membrane.</text>
</comment>
<comment type="subunit">
    <text evidence="1">The Tol-Pal system is composed of five core proteins: the inner membrane proteins TolA, TolQ and TolR, the periplasmic protein TolB and the outer membrane protein Pal. They form a network linking the inner and outer membranes and the peptidoglycan layer.</text>
</comment>
<comment type="subcellular location">
    <subcellularLocation>
        <location evidence="1">Periplasm</location>
    </subcellularLocation>
</comment>
<comment type="similarity">
    <text evidence="1">Belongs to the TolB family.</text>
</comment>
<name>TOLB_SHIBS</name>
<gene>
    <name evidence="1" type="primary">tolB</name>
    <name type="ordered locus">SBO_0599</name>
</gene>
<protein>
    <recommendedName>
        <fullName evidence="1">Tol-Pal system protein TolB</fullName>
    </recommendedName>
</protein>